<organism>
    <name type="scientific">Staphylococcus aureus (strain USA300)</name>
    <dbReference type="NCBI Taxonomy" id="367830"/>
    <lineage>
        <taxon>Bacteria</taxon>
        <taxon>Bacillati</taxon>
        <taxon>Bacillota</taxon>
        <taxon>Bacilli</taxon>
        <taxon>Bacillales</taxon>
        <taxon>Staphylococcaceae</taxon>
        <taxon>Staphylococcus</taxon>
    </lineage>
</organism>
<gene>
    <name evidence="1" type="primary">panD</name>
    <name type="ordered locus">SAUSA300_2532</name>
</gene>
<name>PAND_STAA3</name>
<reference key="1">
    <citation type="journal article" date="2006" name="Lancet">
        <title>Complete genome sequence of USA300, an epidemic clone of community-acquired meticillin-resistant Staphylococcus aureus.</title>
        <authorList>
            <person name="Diep B.A."/>
            <person name="Gill S.R."/>
            <person name="Chang R.F."/>
            <person name="Phan T.H."/>
            <person name="Chen J.H."/>
            <person name="Davidson M.G."/>
            <person name="Lin F."/>
            <person name="Lin J."/>
            <person name="Carleton H.A."/>
            <person name="Mongodin E.F."/>
            <person name="Sensabaugh G.F."/>
            <person name="Perdreau-Remington F."/>
        </authorList>
    </citation>
    <scope>NUCLEOTIDE SEQUENCE [LARGE SCALE GENOMIC DNA]</scope>
    <source>
        <strain>USA300</strain>
    </source>
</reference>
<accession>Q2FDR2</accession>
<protein>
    <recommendedName>
        <fullName evidence="1">Aspartate 1-decarboxylase</fullName>
        <ecNumber evidence="1">4.1.1.11</ecNumber>
    </recommendedName>
    <alternativeName>
        <fullName evidence="1">Aspartate alpha-decarboxylase</fullName>
    </alternativeName>
    <component>
        <recommendedName>
            <fullName evidence="1">Aspartate 1-decarboxylase beta chain</fullName>
        </recommendedName>
    </component>
    <component>
        <recommendedName>
            <fullName evidence="1">Aspartate 1-decarboxylase alpha chain</fullName>
        </recommendedName>
    </component>
</protein>
<evidence type="ECO:0000255" key="1">
    <source>
        <dbReference type="HAMAP-Rule" id="MF_00446"/>
    </source>
</evidence>
<evidence type="ECO:0000305" key="2"/>
<proteinExistence type="inferred from homology"/>
<comment type="function">
    <text evidence="1">Catalyzes the pyruvoyl-dependent decarboxylation of aspartate to produce beta-alanine.</text>
</comment>
<comment type="catalytic activity">
    <reaction evidence="1">
        <text>L-aspartate + H(+) = beta-alanine + CO2</text>
        <dbReference type="Rhea" id="RHEA:19497"/>
        <dbReference type="ChEBI" id="CHEBI:15378"/>
        <dbReference type="ChEBI" id="CHEBI:16526"/>
        <dbReference type="ChEBI" id="CHEBI:29991"/>
        <dbReference type="ChEBI" id="CHEBI:57966"/>
        <dbReference type="EC" id="4.1.1.11"/>
    </reaction>
</comment>
<comment type="cofactor">
    <cofactor evidence="1">
        <name>pyruvate</name>
        <dbReference type="ChEBI" id="CHEBI:15361"/>
    </cofactor>
    <text evidence="1">Binds 1 pyruvoyl group covalently per subunit.</text>
</comment>
<comment type="pathway">
    <text evidence="1">Cofactor biosynthesis; (R)-pantothenate biosynthesis; beta-alanine from L-aspartate: step 1/1.</text>
</comment>
<comment type="subunit">
    <text evidence="1">Heterooctamer of four alpha and four beta subunits.</text>
</comment>
<comment type="subcellular location">
    <subcellularLocation>
        <location evidence="1">Cytoplasm</location>
    </subcellularLocation>
</comment>
<comment type="PTM">
    <text evidence="1">Is synthesized initially as an inactive proenzyme, which is activated by self-cleavage at a specific serine bond to produce a beta-subunit with a hydroxyl group at its C-terminus and an alpha-subunit with a pyruvoyl group at its N-terminus.</text>
</comment>
<comment type="similarity">
    <text evidence="1">Belongs to the PanD family.</text>
</comment>
<comment type="sequence caution" evidence="2">
    <conflict type="erroneous initiation">
        <sequence resource="EMBL-CDS" id="ABD22676"/>
    </conflict>
</comment>
<sequence>MIRTMMNAKIHRARVTESNLNYVGSITIDSDILEAVDILPNEKVAIVNNNNGARFETYVIAGERGSGKICLNGAASRLVEVGDVVIIMTYAQLNEEEIKNHAPKVAVMNEDNVIIEMIHEKENTIVL</sequence>
<keyword id="KW-0068">Autocatalytic cleavage</keyword>
<keyword id="KW-0963">Cytoplasm</keyword>
<keyword id="KW-0210">Decarboxylase</keyword>
<keyword id="KW-0456">Lyase</keyword>
<keyword id="KW-0566">Pantothenate biosynthesis</keyword>
<keyword id="KW-0670">Pyruvate</keyword>
<keyword id="KW-0704">Schiff base</keyword>
<keyword id="KW-0865">Zymogen</keyword>
<feature type="chain" id="PRO_0000236899" description="Aspartate 1-decarboxylase beta chain" evidence="1">
    <location>
        <begin position="1"/>
        <end position="24"/>
    </location>
</feature>
<feature type="chain" id="PRO_0000236900" description="Aspartate 1-decarboxylase alpha chain" evidence="1">
    <location>
        <begin position="25"/>
        <end position="127"/>
    </location>
</feature>
<feature type="active site" description="Schiff-base intermediate with substrate; via pyruvic acid" evidence="1">
    <location>
        <position position="25"/>
    </location>
</feature>
<feature type="active site" description="Proton donor" evidence="1">
    <location>
        <position position="58"/>
    </location>
</feature>
<feature type="binding site" evidence="1">
    <location>
        <position position="57"/>
    </location>
    <ligand>
        <name>substrate</name>
    </ligand>
</feature>
<feature type="binding site" evidence="1">
    <location>
        <begin position="73"/>
        <end position="75"/>
    </location>
    <ligand>
        <name>substrate</name>
    </ligand>
</feature>
<feature type="modified residue" description="Pyruvic acid (Ser)" evidence="1">
    <location>
        <position position="25"/>
    </location>
</feature>
<dbReference type="EC" id="4.1.1.11" evidence="1"/>
<dbReference type="EMBL" id="CP000255">
    <property type="protein sequence ID" value="ABD22676.1"/>
    <property type="status" value="ALT_INIT"/>
    <property type="molecule type" value="Genomic_DNA"/>
</dbReference>
<dbReference type="RefSeq" id="WP_000621532.1">
    <property type="nucleotide sequence ID" value="NZ_CP027476.1"/>
</dbReference>
<dbReference type="SMR" id="Q2FDR2"/>
<dbReference type="GeneID" id="98346911"/>
<dbReference type="KEGG" id="saa:SAUSA300_2532"/>
<dbReference type="HOGENOM" id="CLU_115305_2_0_9"/>
<dbReference type="UniPathway" id="UPA00028">
    <property type="reaction ID" value="UER00002"/>
</dbReference>
<dbReference type="Proteomes" id="UP000001939">
    <property type="component" value="Chromosome"/>
</dbReference>
<dbReference type="GO" id="GO:0005829">
    <property type="term" value="C:cytosol"/>
    <property type="evidence" value="ECO:0007669"/>
    <property type="project" value="TreeGrafter"/>
</dbReference>
<dbReference type="GO" id="GO:0004068">
    <property type="term" value="F:aspartate 1-decarboxylase activity"/>
    <property type="evidence" value="ECO:0007669"/>
    <property type="project" value="UniProtKB-UniRule"/>
</dbReference>
<dbReference type="GO" id="GO:0006523">
    <property type="term" value="P:alanine biosynthetic process"/>
    <property type="evidence" value="ECO:0007669"/>
    <property type="project" value="InterPro"/>
</dbReference>
<dbReference type="GO" id="GO:0015940">
    <property type="term" value="P:pantothenate biosynthetic process"/>
    <property type="evidence" value="ECO:0007669"/>
    <property type="project" value="UniProtKB-UniRule"/>
</dbReference>
<dbReference type="CDD" id="cd06919">
    <property type="entry name" value="Asp_decarbox"/>
    <property type="match status" value="1"/>
</dbReference>
<dbReference type="Gene3D" id="2.40.40.20">
    <property type="match status" value="1"/>
</dbReference>
<dbReference type="HAMAP" id="MF_00446">
    <property type="entry name" value="PanD"/>
    <property type="match status" value="1"/>
</dbReference>
<dbReference type="InterPro" id="IPR009010">
    <property type="entry name" value="Asp_de-COase-like_dom_sf"/>
</dbReference>
<dbReference type="InterPro" id="IPR003190">
    <property type="entry name" value="Asp_decarbox"/>
</dbReference>
<dbReference type="NCBIfam" id="TIGR00223">
    <property type="entry name" value="panD"/>
    <property type="match status" value="1"/>
</dbReference>
<dbReference type="PANTHER" id="PTHR21012">
    <property type="entry name" value="ASPARTATE 1-DECARBOXYLASE"/>
    <property type="match status" value="1"/>
</dbReference>
<dbReference type="PANTHER" id="PTHR21012:SF0">
    <property type="entry name" value="ASPARTATE 1-DECARBOXYLASE"/>
    <property type="match status" value="1"/>
</dbReference>
<dbReference type="Pfam" id="PF02261">
    <property type="entry name" value="Asp_decarbox"/>
    <property type="match status" value="1"/>
</dbReference>
<dbReference type="PIRSF" id="PIRSF006246">
    <property type="entry name" value="Asp_decarbox"/>
    <property type="match status" value="1"/>
</dbReference>
<dbReference type="SUPFAM" id="SSF50692">
    <property type="entry name" value="ADC-like"/>
    <property type="match status" value="1"/>
</dbReference>